<comment type="function">
    <text evidence="1">Transcriptional activator that increases RNA Pol II processivity, thereby increasing the level of full-length viral transcripts. Recognizes a hairpin structure at the 5'-LTR of the nascent viral mRNAs referred to as the transactivation responsive RNA element (TAR) and recruits the cyclin T1-CDK9 complex (P-TEFb complex) that will in turn hyperphosphorylate the RNA polymerase II to allow efficient elongation. The CDK9 component of P-TEFb and other Tat-activated kinases hyperphosphorylate the C-terminus of RNA Pol II that becomes stabilized and much more processive. Other factors such as HTATSF1/Tat-SF1, SUPT5H/SPT5, and HTATIP2 are also important for Tat's function. Besides its effect on RNA Pol II processivity, Tat induces chromatin remodeling of proviral genes by recruiting the histone acetyltransferases (HATs) CREBBP, EP300 and PCAF to the chromatin. This also contributes to the increase in proviral transcription rate, especially when the provirus integrates in transcriptionally silent region of the host genome. To ensure maximal activation of the LTR, Tat mediates nuclear translocation of NF-kappa-B by interacting with host RELA. Through its interaction with host TBP, Tat may also modulate transcription initiation. Tat can reactivate a latently infected cell by penetrating in it and transactivating its LTR promoter. In the cytoplasm, Tat is thought to act as a translational activator of HIV-1 mRNAs.</text>
</comment>
<comment type="function">
    <text evidence="1">Extracellular circulating Tat can be endocytosed by surrounding uninfected cells via the binding to several surface receptors such as CD26, CXCR4, heparan sulfate proteoglycans (HSPG) or LDLR. Neurons are rarely infected, but they internalize Tat via their LDLR. Through its interaction with nuclear HATs, Tat is potentially able to control the acetylation-dependent cellular gene expression. Modulates the expression of many cellular genes involved in cell survival, proliferation or in coding for cytokines or cytokine receptors. Tat plays a role in T-cell and neurons apoptosis. Tat induced neurotoxicity and apoptosis probably contribute to neuroAIDS. Circulating Tat also acts as a chemokine-like and/or growth factor-like molecule that binds to specific receptors on the surface of the cells, affecting many cellular pathways. In the vascular system, Tat binds to ITGAV/ITGB3 and ITGA5/ITGB1 integrins dimers at the surface of endothelial cells and competes with bFGF for heparin-binding sites, leading to an excess of soluble bFGF.</text>
</comment>
<comment type="subunit">
    <text evidence="1">Interacts with host CCNT1. Associates with the P-TEFb complex composed at least of Tat, P-TEFb (CDK9 and CCNT1), TAR RNA, RNA Pol II. Recruits the HATs CREBBP, TAF1/TFIID, EP300, PCAF and GCN5L2. Interacts with host KAT5/Tip60; this interaction targets the latter to degradation. Interacts with the host deacetylase SIRT1. Interacts with host capping enzyme RNGTT; this interaction stimulates RNGTT. Binds to host KDR, and to the host integrins ITGAV/ITGB3 and ITGA5/ITGB1. Interacts with host KPNB1/importin beta-1 without previous binding to KPNA1/importin alpha-1. Interacts with EIF2AK2. Interacts with host nucleosome assembly protein NAP1L1; this interaction may be required for the transport of Tat within the nucleus, since the two proteins interact at the nuclear rim. Interacts with host C1QBP/SF2P32; this interaction involves lysine-acetylated Tat. Interacts with the host chemokine receptors CCR2, CCR3 and CXCR4. Interacts with host DPP4/CD26; this interaction may trigger an anti-proliferative effect. Interacts with host LDLR. Interacts with the host extracellular matrix metalloproteinase MMP1. Interacts with host PRMT6; this interaction mediates Tat's methylation. Interacts with, and is ubiquitinated by MDM2/Hdm2. Interacts with host PSMC3 and HTATIP2. Interacts with STAB1; this interaction may overcome SATB1-mediated repression of IL2 and IL2RA (interleukin) in T cells by binding to the same domain than HDAC1. Interacts (when acetylated) with human CDK13, thereby increasing HIV-1 mRNA splicing and promoting the production of the doubly spliced HIV-1 protein Nef. Interacts with host TBP; this interaction modulates the activity of transcriptional pre-initiation complex. Interacts with host RELA. Interacts with host PLSCR1; this interaction negatively regulates Tat transactivation activity by altering its subcellular distribution.</text>
</comment>
<comment type="subcellular location">
    <subcellularLocation>
        <location evidence="1">Host nucleus</location>
        <location evidence="1">Host nucleolus</location>
    </subcellularLocation>
    <subcellularLocation>
        <location evidence="1">Host cytoplasm</location>
    </subcellularLocation>
    <subcellularLocation>
        <location evidence="1">Secreted</location>
    </subcellularLocation>
    <text evidence="1">Probably localizes to both nuclear and nucleolar compartments. Nuclear localization is mediated through the interaction of the nuclear localization signal with importin KPNB1. Secretion occurs through a Golgi-independent pathway. Tat is released from infected cells to the extracellular space where it remains associated to the cell membrane, or is secreted into the cerebrospinal fluid and sera. Extracellular Tat can be endocytosed by surrounding uninfected cells via binding to several receptors depending on the cell type.</text>
</comment>
<comment type="alternative products">
    <event type="alternative splicing"/>
    <isoform>
        <id>O41801-1</id>
        <name>Long</name>
        <sequence type="displayed"/>
    </isoform>
    <isoform>
        <id>O41801-2</id>
        <name>Short</name>
        <sequence type="described" ref="VSP_022401"/>
    </isoform>
</comment>
<comment type="domain">
    <text evidence="1">The cell attachment site mediates the interaction with ITGAV/ITGB3 and ITGA5/ITGB1 integrins, leading to vascular cell migration and invasion. This interaction also provides endothelial cells with the adhesion signal they require to grow in response to mitogens.</text>
</comment>
<comment type="domain">
    <text evidence="1">The Cys-rich region may bind 2 zinc ions. This region is involved in binding to KAT5.</text>
</comment>
<comment type="domain">
    <text evidence="1">The transactivation domain mediates the interaction with CCNT1, GCN5L2, and MDM2.</text>
</comment>
<comment type="domain">
    <text evidence="1">The Arg-rich RNA-binding region binds the TAR RNA. This region also mediates the nuclear localization through direct binding to KPNB1 and is involved in Tat's transfer across cell membranes (protein transduction). The same region is required for the interaction with EP300, PCAF, EIF2AK2 and KDR.</text>
</comment>
<comment type="PTM">
    <text evidence="1">Asymmetrical arginine methylation by host PRMT6 seems to diminish the transactivation capacity of Tat and affects the interaction with host CCNT1.</text>
</comment>
<comment type="PTM">
    <text evidence="1">Acetylation by EP300, CREBBP, GCN5L2/GCN5 and PCAF regulates the transactivation activity of Tat. EP300-mediated acetylation of Lys-50 promotes dissociation of Tat from the TAR RNA through the competitive binding to PCAF's bromodomain. In addition, the non-acetylated Tat's N-terminus can also interact with PCAF. PCAF-mediated acetylation of Lys-28 enhances Tat's binding to CCNT1. Lys-50 is deacetylated by SIRT1.</text>
</comment>
<comment type="PTM">
    <text evidence="1">Polyubiquitination by host MDM2 does not target Tat to degradation, but activates its transactivation function and fosters interaction with CCNT1 and TAR RNA.</text>
</comment>
<comment type="PTM">
    <text evidence="1">Phosphorylated by EIF2AK2 on serine and threonine residues adjacent to the basic region important for TAR RNA binding and function. Phosphorylation of Tat by EIF2AK2 is dependent on the prior activation of EIF2AK2 by dsRNA.</text>
</comment>
<comment type="miscellaneous">
    <text evidence="1">HIV-1 lineages are divided in three main groups, M (for Major), O (for Outlier), and N (for New, or Non-M, Non-O). The vast majority of strains found worldwide belong to the group M. Group O seems to be endemic to and largely confined to Cameroon and neighboring countries in West Central Africa, where these viruses represent a small minority of HIV-1 strains. The group N is represented by a limited number of isolates from Cameroonian persons. The group M is further subdivided in 9 clades or subtypes (A to D, F to H, J and K).</text>
</comment>
<comment type="miscellaneous">
    <molecule>Isoform Short</molecule>
    <text evidence="3">Expressed in the late stage of the infection cycle, when unspliced viral RNAs are exported to the cytoplasm by the viral Rev protein.</text>
</comment>
<comment type="similarity">
    <text evidence="1">Belongs to the lentiviruses Tat family.</text>
</comment>
<accession>O41801</accession>
<feature type="chain" id="PRO_0000244846" description="Protein Tat">
    <location>
        <begin position="1"/>
        <end position="101"/>
    </location>
</feature>
<feature type="region of interest" description="Transactivation" evidence="1">
    <location>
        <begin position="1"/>
        <end position="48"/>
    </location>
</feature>
<feature type="region of interest" description="Interaction with human CREBBP" evidence="1">
    <location>
        <begin position="1"/>
        <end position="24"/>
    </location>
</feature>
<feature type="region of interest" description="Cysteine-rich" evidence="1">
    <location>
        <begin position="22"/>
        <end position="37"/>
    </location>
</feature>
<feature type="region of interest" description="Core" evidence="1">
    <location>
        <begin position="38"/>
        <end position="48"/>
    </location>
</feature>
<feature type="region of interest" description="Disordered" evidence="2">
    <location>
        <begin position="48"/>
        <end position="101"/>
    </location>
</feature>
<feature type="region of interest" description="Interaction with the host capping enzyme RNGTT" evidence="1">
    <location>
        <begin position="49"/>
        <end position="86"/>
    </location>
</feature>
<feature type="short sequence motif" description="Nuclear localization signal, RNA-binding (TAR), and protein transduction" evidence="1">
    <location>
        <begin position="49"/>
        <end position="57"/>
    </location>
</feature>
<feature type="compositionally biased region" description="Basic and acidic residues" evidence="2">
    <location>
        <begin position="85"/>
        <end position="101"/>
    </location>
</feature>
<feature type="binding site" evidence="1">
    <location>
        <position position="22"/>
    </location>
    <ligand>
        <name>Zn(2+)</name>
        <dbReference type="ChEBI" id="CHEBI:29105"/>
        <label>1</label>
    </ligand>
</feature>
<feature type="binding site" evidence="1">
    <location>
        <position position="25"/>
    </location>
    <ligand>
        <name>Zn(2+)</name>
        <dbReference type="ChEBI" id="CHEBI:29105"/>
        <label>2</label>
    </ligand>
</feature>
<feature type="binding site" evidence="1">
    <location>
        <position position="27"/>
    </location>
    <ligand>
        <name>Zn(2+)</name>
        <dbReference type="ChEBI" id="CHEBI:29105"/>
        <label>2</label>
    </ligand>
</feature>
<feature type="binding site" evidence="1">
    <location>
        <position position="30"/>
    </location>
    <ligand>
        <name>Zn(2+)</name>
        <dbReference type="ChEBI" id="CHEBI:29105"/>
        <label>2</label>
    </ligand>
</feature>
<feature type="binding site" evidence="1">
    <location>
        <position position="33"/>
    </location>
    <ligand>
        <name>Zn(2+)</name>
        <dbReference type="ChEBI" id="CHEBI:29105"/>
        <label>1</label>
    </ligand>
</feature>
<feature type="binding site" evidence="1">
    <location>
        <position position="34"/>
    </location>
    <ligand>
        <name>Zn(2+)</name>
        <dbReference type="ChEBI" id="CHEBI:29105"/>
        <label>1</label>
    </ligand>
</feature>
<feature type="binding site" evidence="1">
    <location>
        <position position="37"/>
    </location>
    <ligand>
        <name>Zn(2+)</name>
        <dbReference type="ChEBI" id="CHEBI:29105"/>
        <label>1</label>
    </ligand>
</feature>
<feature type="site" description="Essential for Tat translocation through the endosomal membrane" evidence="1">
    <location>
        <position position="11"/>
    </location>
</feature>
<feature type="modified residue" description="N6-acetyllysine; by host PCAF" evidence="1">
    <location>
        <position position="28"/>
    </location>
</feature>
<feature type="modified residue" description="N6-acetyllysine; by host EP300 and GCN5L2" evidence="1">
    <location>
        <position position="50"/>
    </location>
</feature>
<feature type="modified residue" description="N6-acetyllysine; by host EP300 and GCN5L2" evidence="1">
    <location>
        <position position="51"/>
    </location>
</feature>
<feature type="modified residue" description="Asymmetric dimethylarginine; by host PRMT6" evidence="1">
    <location>
        <position position="52"/>
    </location>
</feature>
<feature type="modified residue" description="Asymmetric dimethylarginine; by host PRMT6" evidence="1">
    <location>
        <position position="53"/>
    </location>
</feature>
<feature type="cross-link" description="Glycyl lysine isopeptide (Lys-Gly) (interchain with G-Cter in ubiquitin)" evidence="1">
    <location>
        <position position="71"/>
    </location>
</feature>
<feature type="splice variant" id="VSP_022401" description="In isoform Short.">
    <location>
        <begin position="73"/>
        <end position="101"/>
    </location>
</feature>
<proteinExistence type="inferred from homology"/>
<organismHost>
    <name type="scientific">Homo sapiens</name>
    <name type="common">Human</name>
    <dbReference type="NCBI Taxonomy" id="9606"/>
</organismHost>
<keyword id="KW-0007">Acetylation</keyword>
<keyword id="KW-0010">Activator</keyword>
<keyword id="KW-0014">AIDS</keyword>
<keyword id="KW-0025">Alternative splicing</keyword>
<keyword id="KW-0053">Apoptosis</keyword>
<keyword id="KW-1035">Host cytoplasm</keyword>
<keyword id="KW-1048">Host nucleus</keyword>
<keyword id="KW-0945">Host-virus interaction</keyword>
<keyword id="KW-1090">Inhibition of host innate immune response by virus</keyword>
<keyword id="KW-1114">Inhibition of host interferon signaling pathway by virus</keyword>
<keyword id="KW-0922">Interferon antiviral system evasion</keyword>
<keyword id="KW-1017">Isopeptide bond</keyword>
<keyword id="KW-0479">Metal-binding</keyword>
<keyword id="KW-0488">Methylation</keyword>
<keyword id="KW-1122">Modulation of host chromatin by virus</keyword>
<keyword id="KW-1126">Modulation of host PP1 activity by virus</keyword>
<keyword id="KW-0597">Phosphoprotein</keyword>
<keyword id="KW-0694">RNA-binding</keyword>
<keyword id="KW-0964">Secreted</keyword>
<keyword id="KW-0804">Transcription</keyword>
<keyword id="KW-0805">Transcription regulation</keyword>
<keyword id="KW-0832">Ubl conjugation</keyword>
<keyword id="KW-0899">Viral immunoevasion</keyword>
<keyword id="KW-0862">Zinc</keyword>
<protein>
    <recommendedName>
        <fullName evidence="1">Protein Tat</fullName>
    </recommendedName>
    <alternativeName>
        <fullName evidence="1">Transactivating regulatory protein</fullName>
    </alternativeName>
</protein>
<gene>
    <name evidence="1" type="primary">tat</name>
</gene>
<name>TAT_HV19N</name>
<dbReference type="EMBL" id="U88826">
    <property type="protein sequence ID" value="AAC32656.1"/>
    <property type="molecule type" value="Genomic_DNA"/>
</dbReference>
<dbReference type="SMR" id="O41801"/>
<dbReference type="Proteomes" id="UP000128912">
    <property type="component" value="Segment"/>
</dbReference>
<dbReference type="GO" id="GO:0005576">
    <property type="term" value="C:extracellular region"/>
    <property type="evidence" value="ECO:0007669"/>
    <property type="project" value="UniProtKB-SubCell"/>
</dbReference>
<dbReference type="GO" id="GO:0030430">
    <property type="term" value="C:host cell cytoplasm"/>
    <property type="evidence" value="ECO:0007669"/>
    <property type="project" value="UniProtKB-SubCell"/>
</dbReference>
<dbReference type="GO" id="GO:0044196">
    <property type="term" value="C:host cell nucleolus"/>
    <property type="evidence" value="ECO:0007669"/>
    <property type="project" value="UniProtKB-SubCell"/>
</dbReference>
<dbReference type="GO" id="GO:0042805">
    <property type="term" value="F:actinin binding"/>
    <property type="evidence" value="ECO:0007669"/>
    <property type="project" value="UniProtKB-UniRule"/>
</dbReference>
<dbReference type="GO" id="GO:0030332">
    <property type="term" value="F:cyclin binding"/>
    <property type="evidence" value="ECO:0007669"/>
    <property type="project" value="UniProtKB-UniRule"/>
</dbReference>
<dbReference type="GO" id="GO:0046872">
    <property type="term" value="F:metal ion binding"/>
    <property type="evidence" value="ECO:0007669"/>
    <property type="project" value="UniProtKB-UniRule"/>
</dbReference>
<dbReference type="GO" id="GO:0019904">
    <property type="term" value="F:protein domain specific binding"/>
    <property type="evidence" value="ECO:0007669"/>
    <property type="project" value="UniProtKB-UniRule"/>
</dbReference>
<dbReference type="GO" id="GO:0004865">
    <property type="term" value="F:protein serine/threonine phosphatase inhibitor activity"/>
    <property type="evidence" value="ECO:0007669"/>
    <property type="project" value="UniProtKB-KW"/>
</dbReference>
<dbReference type="GO" id="GO:0001070">
    <property type="term" value="F:RNA-binding transcription regulator activity"/>
    <property type="evidence" value="ECO:0007669"/>
    <property type="project" value="UniProtKB-UniRule"/>
</dbReference>
<dbReference type="GO" id="GO:1990970">
    <property type="term" value="F:trans-activation response element binding"/>
    <property type="evidence" value="ECO:0007669"/>
    <property type="project" value="UniProtKB-UniRule"/>
</dbReference>
<dbReference type="GO" id="GO:0006351">
    <property type="term" value="P:DNA-templated transcription"/>
    <property type="evidence" value="ECO:0007669"/>
    <property type="project" value="UniProtKB-UniRule"/>
</dbReference>
<dbReference type="GO" id="GO:0032968">
    <property type="term" value="P:positive regulation of transcription elongation by RNA polymerase II"/>
    <property type="evidence" value="ECO:0007669"/>
    <property type="project" value="UniProtKB-UniRule"/>
</dbReference>
<dbReference type="GO" id="GO:0050434">
    <property type="term" value="P:positive regulation of viral transcription"/>
    <property type="evidence" value="ECO:0007669"/>
    <property type="project" value="UniProtKB-UniRule"/>
</dbReference>
<dbReference type="GO" id="GO:0039525">
    <property type="term" value="P:symbiont-mediated perturbation of host chromatin organization"/>
    <property type="evidence" value="ECO:0007669"/>
    <property type="project" value="UniProtKB-UniRule"/>
</dbReference>
<dbReference type="GO" id="GO:0052170">
    <property type="term" value="P:symbiont-mediated suppression of host innate immune response"/>
    <property type="evidence" value="ECO:0007669"/>
    <property type="project" value="UniProtKB-KW"/>
</dbReference>
<dbReference type="GO" id="GO:0039606">
    <property type="term" value="P:symbiont-mediated suppression of host translation initiation"/>
    <property type="evidence" value="ECO:0007669"/>
    <property type="project" value="UniProtKB-KW"/>
</dbReference>
<dbReference type="GO" id="GO:0039502">
    <property type="term" value="P:symbiont-mediated suppression of host type I interferon-mediated signaling pathway"/>
    <property type="evidence" value="ECO:0007669"/>
    <property type="project" value="UniProtKB-UniRule"/>
</dbReference>
<dbReference type="Gene3D" id="4.10.20.10">
    <property type="entry name" value="Tat domain"/>
    <property type="match status" value="1"/>
</dbReference>
<dbReference type="HAMAP" id="MF_04079">
    <property type="entry name" value="HIV_TAT"/>
    <property type="match status" value="1"/>
</dbReference>
<dbReference type="InterPro" id="IPR001831">
    <property type="entry name" value="IV_Tat"/>
</dbReference>
<dbReference type="InterPro" id="IPR036963">
    <property type="entry name" value="Tat_dom_sf"/>
</dbReference>
<dbReference type="Pfam" id="PF00539">
    <property type="entry name" value="Tat"/>
    <property type="match status" value="1"/>
</dbReference>
<dbReference type="PRINTS" id="PR00055">
    <property type="entry name" value="HIVTATDOMAIN"/>
</dbReference>
<sequence>MDPVDPKLEPWNHPGSQPTTPCNKCYCKVCCWHCQVCFLNKGLGISYGRKKRRPRRGTPQGSKDHQNPVPKQPLPITSGNPTGSEKPKKEVASKTETDPLD</sequence>
<reference key="1">
    <citation type="journal article" date="1998" name="J. Virol.">
        <title>A comprehensive panel of near-full-length clones and reference sequences for non-subtype B isolates of human immunodeficiency virus type 1.</title>
        <authorList>
            <person name="Gao F."/>
            <person name="Robertson D.L."/>
            <person name="Carruthers C.D."/>
            <person name="Morrison S.G."/>
            <person name="Jian B."/>
            <person name="Chen Y."/>
            <person name="Barre-Sinoussi F."/>
            <person name="Girard M."/>
            <person name="Srinivasan A."/>
            <person name="Abimiku A.G."/>
            <person name="Shaw G.M."/>
            <person name="Sharp P.M."/>
            <person name="Hahn B.H."/>
        </authorList>
    </citation>
    <scope>NUCLEOTIDE SEQUENCE [GENOMIC DNA]</scope>
    <source>
        <strain>92NG083</strain>
    </source>
</reference>
<reference key="2">
    <citation type="journal article" date="2005" name="Microbes Infect.">
        <title>Decoding Tat: the biology of HIV Tat posttranslational modifications.</title>
        <authorList>
            <person name="Hetzer C."/>
            <person name="Dormeyer W."/>
            <person name="Schnolzer M."/>
            <person name="Ott M."/>
        </authorList>
    </citation>
    <scope>REVIEW</scope>
    <scope>ALTERNATIVE SPLICING</scope>
</reference>
<reference key="3">
    <citation type="journal article" date="2006" name="Front. Biosci.">
        <title>The multiple functions of HIV-1 Tat: proliferation versus apoptosis.</title>
        <authorList>
            <person name="Peruzzi F."/>
        </authorList>
    </citation>
    <scope>REVIEW</scope>
</reference>
<reference key="4">
    <citation type="journal article" date="2006" name="Microbes Infect.">
        <title>HIV tat and neurotoxicity.</title>
        <authorList>
            <person name="King J.E."/>
            <person name="Eugenin E.A."/>
            <person name="Buckner C.M."/>
            <person name="Berman J.W."/>
        </authorList>
    </citation>
    <scope>REVIEW</scope>
</reference>
<evidence type="ECO:0000255" key="1">
    <source>
        <dbReference type="HAMAP-Rule" id="MF_04079"/>
    </source>
</evidence>
<evidence type="ECO:0000256" key="2">
    <source>
        <dbReference type="SAM" id="MobiDB-lite"/>
    </source>
</evidence>
<evidence type="ECO:0000305" key="3"/>
<organism>
    <name type="scientific">Human immunodeficiency virus type 1 group M subtype G (isolate 92NG083)</name>
    <name type="common">HIV-1</name>
    <dbReference type="NCBI Taxonomy" id="388825"/>
    <lineage>
        <taxon>Viruses</taxon>
        <taxon>Riboviria</taxon>
        <taxon>Pararnavirae</taxon>
        <taxon>Artverviricota</taxon>
        <taxon>Revtraviricetes</taxon>
        <taxon>Ortervirales</taxon>
        <taxon>Retroviridae</taxon>
        <taxon>Orthoretrovirinae</taxon>
        <taxon>Lentivirus</taxon>
        <taxon>Human immunodeficiency virus type 1</taxon>
    </lineage>
</organism>